<protein>
    <recommendedName>
        <fullName evidence="1">Orotate phosphoribosyltransferase</fullName>
        <shortName evidence="1">OPRT</shortName>
        <shortName evidence="1">OPRTase</shortName>
        <ecNumber evidence="1">2.4.2.10</ecNumber>
    </recommendedName>
</protein>
<organism>
    <name type="scientific">Campylobacter lari (strain RM2100 / D67 / ATCC BAA-1060)</name>
    <dbReference type="NCBI Taxonomy" id="306263"/>
    <lineage>
        <taxon>Bacteria</taxon>
        <taxon>Pseudomonadati</taxon>
        <taxon>Campylobacterota</taxon>
        <taxon>Epsilonproteobacteria</taxon>
        <taxon>Campylobacterales</taxon>
        <taxon>Campylobacteraceae</taxon>
        <taxon>Campylobacter</taxon>
    </lineage>
</organism>
<keyword id="KW-0328">Glycosyltransferase</keyword>
<keyword id="KW-0460">Magnesium</keyword>
<keyword id="KW-0665">Pyrimidine biosynthesis</keyword>
<keyword id="KW-1185">Reference proteome</keyword>
<keyword id="KW-0808">Transferase</keyword>
<sequence length="202" mass="22079">MNLEQIYKDCGAYLQGHFLLSSGKHSEFYLQSAKVLEDPKLAGKLCDELAKIIASYDIKFDSICSPALGGILAGYELARACNKRFIFTERVEGVMNLRRGFEVKKGEKFIVCEDIITTGGSALESAKIIESLGGEVVGFAALANRGFCAVKNLNNPRKENAKLPENLPLFALGNFEFEIYEANVCPLCEKGTKAIKPGSRGN</sequence>
<dbReference type="EC" id="2.4.2.10" evidence="1"/>
<dbReference type="EMBL" id="CP000932">
    <property type="protein sequence ID" value="ACM64813.1"/>
    <property type="molecule type" value="Genomic_DNA"/>
</dbReference>
<dbReference type="RefSeq" id="WP_012662196.1">
    <property type="nucleotide sequence ID" value="NC_012039.1"/>
</dbReference>
<dbReference type="RefSeq" id="WP_012662197.1">
    <property type="nucleotide sequence ID" value="NC_012039.1"/>
</dbReference>
<dbReference type="SMR" id="B9KE25"/>
<dbReference type="STRING" id="306263.Cla_1509"/>
<dbReference type="KEGG" id="cla:CLA_1509"/>
<dbReference type="PATRIC" id="fig|306263.5.peg.1489"/>
<dbReference type="eggNOG" id="COG0461">
    <property type="taxonomic scope" value="Bacteria"/>
</dbReference>
<dbReference type="HOGENOM" id="CLU_074878_3_0_7"/>
<dbReference type="UniPathway" id="UPA00070">
    <property type="reaction ID" value="UER00119"/>
</dbReference>
<dbReference type="Proteomes" id="UP000007727">
    <property type="component" value="Chromosome"/>
</dbReference>
<dbReference type="GO" id="GO:0000287">
    <property type="term" value="F:magnesium ion binding"/>
    <property type="evidence" value="ECO:0007669"/>
    <property type="project" value="UniProtKB-UniRule"/>
</dbReference>
<dbReference type="GO" id="GO:0004588">
    <property type="term" value="F:orotate phosphoribosyltransferase activity"/>
    <property type="evidence" value="ECO:0007669"/>
    <property type="project" value="UniProtKB-UniRule"/>
</dbReference>
<dbReference type="GO" id="GO:0044205">
    <property type="term" value="P:'de novo' UMP biosynthetic process"/>
    <property type="evidence" value="ECO:0007669"/>
    <property type="project" value="UniProtKB-UniRule"/>
</dbReference>
<dbReference type="GO" id="GO:0019856">
    <property type="term" value="P:pyrimidine nucleobase biosynthetic process"/>
    <property type="evidence" value="ECO:0007669"/>
    <property type="project" value="InterPro"/>
</dbReference>
<dbReference type="CDD" id="cd06223">
    <property type="entry name" value="PRTases_typeI"/>
    <property type="match status" value="1"/>
</dbReference>
<dbReference type="Gene3D" id="3.40.50.2020">
    <property type="match status" value="1"/>
</dbReference>
<dbReference type="HAMAP" id="MF_01208">
    <property type="entry name" value="PyrE"/>
    <property type="match status" value="1"/>
</dbReference>
<dbReference type="InterPro" id="IPR023031">
    <property type="entry name" value="OPRT"/>
</dbReference>
<dbReference type="InterPro" id="IPR006273">
    <property type="entry name" value="Orotate_PRibTrfase_bac"/>
</dbReference>
<dbReference type="InterPro" id="IPR000836">
    <property type="entry name" value="PRibTrfase_dom"/>
</dbReference>
<dbReference type="InterPro" id="IPR029057">
    <property type="entry name" value="PRTase-like"/>
</dbReference>
<dbReference type="NCBIfam" id="TIGR01367">
    <property type="entry name" value="pyrE_Therm"/>
    <property type="match status" value="1"/>
</dbReference>
<dbReference type="PANTHER" id="PTHR19278">
    <property type="entry name" value="OROTATE PHOSPHORIBOSYLTRANSFERASE"/>
    <property type="match status" value="1"/>
</dbReference>
<dbReference type="PANTHER" id="PTHR19278:SF9">
    <property type="entry name" value="URIDINE 5'-MONOPHOSPHATE SYNTHASE"/>
    <property type="match status" value="1"/>
</dbReference>
<dbReference type="Pfam" id="PF00156">
    <property type="entry name" value="Pribosyltran"/>
    <property type="match status" value="1"/>
</dbReference>
<dbReference type="SUPFAM" id="SSF53271">
    <property type="entry name" value="PRTase-like"/>
    <property type="match status" value="1"/>
</dbReference>
<dbReference type="PROSITE" id="PS00103">
    <property type="entry name" value="PUR_PYR_PR_TRANSFER"/>
    <property type="match status" value="1"/>
</dbReference>
<evidence type="ECO:0000255" key="1">
    <source>
        <dbReference type="HAMAP-Rule" id="MF_01208"/>
    </source>
</evidence>
<comment type="function">
    <text evidence="1">Catalyzes the transfer of a ribosyl phosphate group from 5-phosphoribose 1-diphosphate to orotate, leading to the formation of orotidine monophosphate (OMP).</text>
</comment>
<comment type="catalytic activity">
    <reaction evidence="1">
        <text>orotidine 5'-phosphate + diphosphate = orotate + 5-phospho-alpha-D-ribose 1-diphosphate</text>
        <dbReference type="Rhea" id="RHEA:10380"/>
        <dbReference type="ChEBI" id="CHEBI:30839"/>
        <dbReference type="ChEBI" id="CHEBI:33019"/>
        <dbReference type="ChEBI" id="CHEBI:57538"/>
        <dbReference type="ChEBI" id="CHEBI:58017"/>
        <dbReference type="EC" id="2.4.2.10"/>
    </reaction>
</comment>
<comment type="cofactor">
    <cofactor evidence="1">
        <name>Mg(2+)</name>
        <dbReference type="ChEBI" id="CHEBI:18420"/>
    </cofactor>
</comment>
<comment type="pathway">
    <text evidence="1">Pyrimidine metabolism; UMP biosynthesis via de novo pathway; UMP from orotate: step 1/2.</text>
</comment>
<comment type="subunit">
    <text evidence="1">Homodimer.</text>
</comment>
<comment type="similarity">
    <text evidence="1">Belongs to the purine/pyrimidine phosphoribosyltransferase family. PyrE subfamily.</text>
</comment>
<accession>B9KE25</accession>
<feature type="chain" id="PRO_1000164676" description="Orotate phosphoribosyltransferase">
    <location>
        <begin position="1"/>
        <end position="202"/>
    </location>
</feature>
<feature type="binding site" evidence="1">
    <location>
        <begin position="113"/>
        <end position="121"/>
    </location>
    <ligand>
        <name>5-phospho-alpha-D-ribose 1-diphosphate</name>
        <dbReference type="ChEBI" id="CHEBI:58017"/>
    </ligand>
</feature>
<feature type="binding site" evidence="1">
    <location>
        <position position="117"/>
    </location>
    <ligand>
        <name>orotate</name>
        <dbReference type="ChEBI" id="CHEBI:30839"/>
    </ligand>
</feature>
<feature type="binding site" evidence="1">
    <location>
        <position position="145"/>
    </location>
    <ligand>
        <name>orotate</name>
        <dbReference type="ChEBI" id="CHEBI:30839"/>
    </ligand>
</feature>
<gene>
    <name evidence="1" type="primary">pyrE</name>
    <name type="ordered locus">Cla_1509</name>
</gene>
<reference key="1">
    <citation type="journal article" date="2008" name="Foodborne Pathog. Dis.">
        <title>The complete genome sequence and analysis of the human pathogen Campylobacter lari.</title>
        <authorList>
            <person name="Miller W.G."/>
            <person name="Wang G."/>
            <person name="Binnewies T.T."/>
            <person name="Parker C.T."/>
        </authorList>
    </citation>
    <scope>NUCLEOTIDE SEQUENCE [LARGE SCALE GENOMIC DNA]</scope>
    <source>
        <strain>RM2100 / D67 / ATCC BAA-1060</strain>
    </source>
</reference>
<proteinExistence type="inferred from homology"/>
<name>PYRE_CAMLR</name>